<name>PGR5_ARATH</name>
<accession>Q9SL05</accession>
<accession>Q8LE53</accession>
<feature type="transit peptide" description="Chloroplast" evidence="11">
    <location>
        <begin position="1"/>
        <end position="60"/>
    </location>
</feature>
<feature type="chain" id="PRO_0000322591" description="Protein PROTON GRADIENT REGULATION 5, chloroplastic">
    <location>
        <begin position="61"/>
        <end position="133"/>
    </location>
</feature>
<feature type="mutagenesis site" description="In pgr5; increased instability of the protein." evidence="1">
    <original>G</original>
    <variation>S</variation>
    <location>
        <position position="130"/>
    </location>
</feature>
<feature type="sequence conflict" description="In Ref. 4; AAM62834." evidence="11" ref="4">
    <original>I</original>
    <variation>L</variation>
    <location>
        <position position="16"/>
    </location>
</feature>
<organism>
    <name type="scientific">Arabidopsis thaliana</name>
    <name type="common">Mouse-ear cress</name>
    <dbReference type="NCBI Taxonomy" id="3702"/>
    <lineage>
        <taxon>Eukaryota</taxon>
        <taxon>Viridiplantae</taxon>
        <taxon>Streptophyta</taxon>
        <taxon>Embryophyta</taxon>
        <taxon>Tracheophyta</taxon>
        <taxon>Spermatophyta</taxon>
        <taxon>Magnoliopsida</taxon>
        <taxon>eudicotyledons</taxon>
        <taxon>Gunneridae</taxon>
        <taxon>Pentapetalae</taxon>
        <taxon>rosids</taxon>
        <taxon>malvids</taxon>
        <taxon>Brassicales</taxon>
        <taxon>Brassicaceae</taxon>
        <taxon>Camelineae</taxon>
        <taxon>Arabidopsis</taxon>
    </lineage>
</organism>
<comment type="function">
    <text evidence="1 2 3 6 7 8 9">Critical for growth under fluctuating-light conditions (PubMed:30390180, PubMed:37339934). Involved in the regulation of the cyclic electron flow (CEF) around Photosystem I. Essential for the reduction of PGRL1A by ferredoxin and for photoprotection. Contributes to maximize photosynthesis efficiency after a long dark adaptation via the regulation of non-photochemical quenching (NPQ); acts independently from DLDG1 (PubMed:32978277, PubMed:37339934). Promotes the induction of steady-state proton motive force (pmf) and energy-dependent quenching (qE) (PubMed:30390180).</text>
</comment>
<comment type="subunit">
    <text evidence="4 6">Interacts with PGRL1A and PGRL1B.</text>
</comment>
<comment type="subcellular location">
    <subcellularLocation>
        <location evidence="1 3 4">Plastid</location>
        <location evidence="1 3 4">Chloroplast thylakoid membrane</location>
        <topology evidence="1 3 4">Peripheral membrane protein</topology>
        <orientation evidence="1 3 4">Stromal side</orientation>
    </subcellularLocation>
</comment>
<comment type="induction">
    <text evidence="5">Up-regulated by drought stress.</text>
</comment>
<comment type="PTM">
    <text>Disulfide bonds; Cys-11 and Cys-105 are probably involved in the formation of disulfide bridges with 'Cys-300' and 'Cys-303' of PGRL1A. 'Cys-272' and 'Cys-275' of PGRL1A may also be used to form the disulfide bridges, but in this case the cyclic electron flow is lost.</text>
</comment>
<comment type="disruption phenotype">
    <text evidence="7 8 9">Normal green leaves under continuous-light conditions (PubMed:30390180, PubMed:37339934). Not able to grow under fluctuating-light conditions (PubMed:30390180, PubMed:37339934). The kea3 pgr5 double mutant combines the phenotypes of the single mutants in non-photochemical quenching (NPQ) induction upon overnight dark adaptation (PubMed:32978277). The double mutant missing DLDG1 and PGR5 (dldg1 pgr5) has a pale-green phenotype similar to the dldlg1 simple mutant in continuous light, and a partial compensation of the growth impairment of pgr5 simple mutant under fluctuating-light conditions; higher NPQ than in pgr5 but lower NPQ than in dldg1 (PubMed:37339934). The double mutant flap1 pgr5 exhibits recovered NPQ, photosystem II quantum yield and growth under fluctuating light, which are all impaired in the single mutant pgr5 (PubMed:30390180).</text>
</comment>
<comment type="similarity">
    <text evidence="11">Belongs to the PGR5 family.</text>
</comment>
<reference key="1">
    <citation type="journal article" date="1999" name="Nature">
        <title>Sequence and analysis of chromosome 2 of the plant Arabidopsis thaliana.</title>
        <authorList>
            <person name="Lin X."/>
            <person name="Kaul S."/>
            <person name="Rounsley S.D."/>
            <person name="Shea T.P."/>
            <person name="Benito M.-I."/>
            <person name="Town C.D."/>
            <person name="Fujii C.Y."/>
            <person name="Mason T.M."/>
            <person name="Bowman C.L."/>
            <person name="Barnstead M.E."/>
            <person name="Feldblyum T.V."/>
            <person name="Buell C.R."/>
            <person name="Ketchum K.A."/>
            <person name="Lee J.J."/>
            <person name="Ronning C.M."/>
            <person name="Koo H.L."/>
            <person name="Moffat K.S."/>
            <person name="Cronin L.A."/>
            <person name="Shen M."/>
            <person name="Pai G."/>
            <person name="Van Aken S."/>
            <person name="Umayam L."/>
            <person name="Tallon L.J."/>
            <person name="Gill J.E."/>
            <person name="Adams M.D."/>
            <person name="Carrera A.J."/>
            <person name="Creasy T.H."/>
            <person name="Goodman H.M."/>
            <person name="Somerville C.R."/>
            <person name="Copenhaver G.P."/>
            <person name="Preuss D."/>
            <person name="Nierman W.C."/>
            <person name="White O."/>
            <person name="Eisen J.A."/>
            <person name="Salzberg S.L."/>
            <person name="Fraser C.M."/>
            <person name="Venter J.C."/>
        </authorList>
    </citation>
    <scope>NUCLEOTIDE SEQUENCE [LARGE SCALE GENOMIC DNA]</scope>
    <source>
        <strain>cv. Columbia</strain>
    </source>
</reference>
<reference key="2">
    <citation type="journal article" date="2017" name="Plant J.">
        <title>Araport11: a complete reannotation of the Arabidopsis thaliana reference genome.</title>
        <authorList>
            <person name="Cheng C.Y."/>
            <person name="Krishnakumar V."/>
            <person name="Chan A.P."/>
            <person name="Thibaud-Nissen F."/>
            <person name="Schobel S."/>
            <person name="Town C.D."/>
        </authorList>
    </citation>
    <scope>GENOME REANNOTATION</scope>
    <source>
        <strain>cv. Columbia</strain>
    </source>
</reference>
<reference key="3">
    <citation type="journal article" date="2003" name="Science">
        <title>Empirical analysis of transcriptional activity in the Arabidopsis genome.</title>
        <authorList>
            <person name="Yamada K."/>
            <person name="Lim J."/>
            <person name="Dale J.M."/>
            <person name="Chen H."/>
            <person name="Shinn P."/>
            <person name="Palm C.J."/>
            <person name="Southwick A.M."/>
            <person name="Wu H.C."/>
            <person name="Kim C.J."/>
            <person name="Nguyen M."/>
            <person name="Pham P.K."/>
            <person name="Cheuk R.F."/>
            <person name="Karlin-Newmann G."/>
            <person name="Liu S.X."/>
            <person name="Lam B."/>
            <person name="Sakano H."/>
            <person name="Wu T."/>
            <person name="Yu G."/>
            <person name="Miranda M."/>
            <person name="Quach H.L."/>
            <person name="Tripp M."/>
            <person name="Chang C.H."/>
            <person name="Lee J.M."/>
            <person name="Toriumi M.J."/>
            <person name="Chan M.M."/>
            <person name="Tang C.C."/>
            <person name="Onodera C.S."/>
            <person name="Deng J.M."/>
            <person name="Akiyama K."/>
            <person name="Ansari Y."/>
            <person name="Arakawa T."/>
            <person name="Banh J."/>
            <person name="Banno F."/>
            <person name="Bowser L."/>
            <person name="Brooks S.Y."/>
            <person name="Carninci P."/>
            <person name="Chao Q."/>
            <person name="Choy N."/>
            <person name="Enju A."/>
            <person name="Goldsmith A.D."/>
            <person name="Gurjal M."/>
            <person name="Hansen N.F."/>
            <person name="Hayashizaki Y."/>
            <person name="Johnson-Hopson C."/>
            <person name="Hsuan V.W."/>
            <person name="Iida K."/>
            <person name="Karnes M."/>
            <person name="Khan S."/>
            <person name="Koesema E."/>
            <person name="Ishida J."/>
            <person name="Jiang P.X."/>
            <person name="Jones T."/>
            <person name="Kawai J."/>
            <person name="Kamiya A."/>
            <person name="Meyers C."/>
            <person name="Nakajima M."/>
            <person name="Narusaka M."/>
            <person name="Seki M."/>
            <person name="Sakurai T."/>
            <person name="Satou M."/>
            <person name="Tamse R."/>
            <person name="Vaysberg M."/>
            <person name="Wallender E.K."/>
            <person name="Wong C."/>
            <person name="Yamamura Y."/>
            <person name="Yuan S."/>
            <person name="Shinozaki K."/>
            <person name="Davis R.W."/>
            <person name="Theologis A."/>
            <person name="Ecker J.R."/>
        </authorList>
    </citation>
    <scope>NUCLEOTIDE SEQUENCE [LARGE SCALE MRNA]</scope>
    <source>
        <strain>cv. Columbia</strain>
    </source>
</reference>
<reference key="4">
    <citation type="submission" date="2002-03" db="EMBL/GenBank/DDBJ databases">
        <title>Full-length cDNA from Arabidopsis thaliana.</title>
        <authorList>
            <person name="Brover V.V."/>
            <person name="Troukhan M.E."/>
            <person name="Alexandrov N.A."/>
            <person name="Lu Y.-P."/>
            <person name="Flavell R.B."/>
            <person name="Feldmann K.A."/>
        </authorList>
    </citation>
    <scope>NUCLEOTIDE SEQUENCE [LARGE SCALE MRNA]</scope>
</reference>
<reference key="5">
    <citation type="journal article" date="2002" name="Cell">
        <title>PGR5 is involved in cyclic electron flow around photosystem I and is essential for photoprotection in Arabidopsis.</title>
        <authorList>
            <person name="Munekage Y."/>
            <person name="Hojo M."/>
            <person name="Meurer J."/>
            <person name="Endo T."/>
            <person name="Tasaka M."/>
            <person name="Shikanai T."/>
        </authorList>
    </citation>
    <scope>FUNCTION</scope>
    <scope>MUTAGENESIS OF GLY-130</scope>
    <scope>SUBCELLULAR LOCATION</scope>
</reference>
<reference key="6">
    <citation type="journal article" date="2007" name="Biochim. Biophys. Acta">
        <title>The role of PGR5 in the redox poising of photosynthetic electron transport.</title>
        <authorList>
            <person name="Nandha B."/>
            <person name="Finazzi G."/>
            <person name="Joliot P."/>
            <person name="Hald S."/>
            <person name="Johnson G.N."/>
        </authorList>
    </citation>
    <scope>FUNCTION</scope>
</reference>
<reference key="7">
    <citation type="journal article" date="2007" name="Plant Cell Physiol.">
        <title>A balanced PGR5 level is required for chloroplast development and optimum operation of cyclic electron transport around photosystem I.</title>
        <authorList>
            <person name="Okegawa Y."/>
            <person name="Long T.A."/>
            <person name="Iwano M."/>
            <person name="Takayama S."/>
            <person name="Kobayashi Y."/>
            <person name="Covert S.F."/>
            <person name="Shikanai T."/>
        </authorList>
    </citation>
    <scope>FUNCTION</scope>
    <scope>SUBCELLULAR LOCATION</scope>
</reference>
<reference key="8">
    <citation type="journal article" date="2008" name="Cell">
        <title>A complex containing PGRL1 and PGR5 is involved in the switch between linear and cyclic electron flow in Arabidopsis.</title>
        <authorList>
            <person name="DalCorso G."/>
            <person name="Pesaresi P."/>
            <person name="Masiero S."/>
            <person name="Aseeva E."/>
            <person name="Schuenemann D."/>
            <person name="Finazzi G."/>
            <person name="Joliot P."/>
            <person name="Barbato R."/>
            <person name="Leister D."/>
        </authorList>
    </citation>
    <scope>SUBCELLULAR LOCATION</scope>
    <scope>INTERACTION WITH PGRL1A AND PGRL1B</scope>
    <source>
        <strain>cv. Columbia</strain>
    </source>
</reference>
<reference key="9">
    <citation type="journal article" date="2010" name="J. Plant Physiol.">
        <title>Drought stress-induced upregulation of components involved in ferredoxin-dependent cyclic electron transfer.</title>
        <authorList>
            <person name="Lehtimaeki N."/>
            <person name="Lintala M."/>
            <person name="Allahverdiyeva Y."/>
            <person name="Aro E.M."/>
            <person name="Mulo P."/>
        </authorList>
    </citation>
    <scope>INDUCTION BY DROUGHT</scope>
</reference>
<reference key="10">
    <citation type="journal article" date="2013" name="Mol. Cell">
        <title>PGRL1 is the elusive ferredoxin-plastoquinone reductase in photosynthetic cyclic electron flow.</title>
        <authorList>
            <person name="Hertle A.P."/>
            <person name="Blunder T."/>
            <person name="Wunder T."/>
            <person name="Pesaresi P."/>
            <person name="Pribil M."/>
            <person name="Armbruster U."/>
            <person name="Leister D."/>
        </authorList>
    </citation>
    <scope>FUNCTION</scope>
    <scope>INTERACTION WITH PGRL1A</scope>
    <scope>DISULFIDE BOND</scope>
</reference>
<reference key="11">
    <citation type="journal article" date="2019" name="Photosyn. Res.">
        <title>Genetic characterization of a flap1 null mutation in Arabidopsis npq4 and pgr5 plants suggests that the regulatory role of FLAP1 involves the control of proton homeostasis in chloroplasts.</title>
        <authorList>
            <person name="Trinh M.D.L."/>
            <person name="Sato R."/>
            <person name="Masuda S."/>
        </authorList>
    </citation>
    <scope>FUNCTION</scope>
    <scope>DISRUPTION PHENOTYPE</scope>
    <source>
        <strain>cv. Columbia</strain>
    </source>
</reference>
<reference key="12">
    <citation type="journal article" date="2020" name="Plant Physiol.">
        <title>Collaboration between NDH and KEA3 allows maximally efficient photosynthesis after a long dark adaptation.</title>
        <authorList>
            <person name="Basso L."/>
            <person name="Yamori W."/>
            <person name="Szabo I."/>
            <person name="Shikanai T."/>
        </authorList>
    </citation>
    <scope>FUNCTION</scope>
    <scope>DISRUPTION PHENOTYPE</scope>
    <source>
        <strain>cv. Columbia GL1</strain>
    </source>
</reference>
<reference key="13">
    <citation type="journal article" date="2023" name="FEBS Lett.">
        <title>Arabidopsis mutants lacking DLDG1 and non-photochemical quenching-related proteins reveal the regulatory role of DLDG1 in chloroplast pH homeostasis.</title>
        <authorList>
            <person name="Suzuki K."/>
            <person name="Masuda S."/>
        </authorList>
    </citation>
    <scope>FUNCTION</scope>
    <scope>DISRUPTION PHENOTYPE</scope>
    <source>
        <strain>cv. Columbia</strain>
    </source>
</reference>
<sequence>MAAASISAIGCNQTLIGTSFYGGWGSSISGEDYQTMLSKTVAPPQQARVSRKAIRAVPMMKNVNEGKGLFAPLVVVTRNLVGKKRFNQLRGKAIALHSQVITEFCKSIGADAKQRQGLIRLAKKNGERLGFLA</sequence>
<gene>
    <name evidence="10" type="primary">PGR5</name>
    <name evidence="12" type="ordered locus">At2g05620</name>
    <name evidence="13" type="ORF">T20G20.3</name>
</gene>
<keyword id="KW-0150">Chloroplast</keyword>
<keyword id="KW-1015">Disulfide bond</keyword>
<keyword id="KW-0249">Electron transport</keyword>
<keyword id="KW-0472">Membrane</keyword>
<keyword id="KW-0934">Plastid</keyword>
<keyword id="KW-1185">Reference proteome</keyword>
<keyword id="KW-0793">Thylakoid</keyword>
<keyword id="KW-0809">Transit peptide</keyword>
<keyword id="KW-0813">Transport</keyword>
<evidence type="ECO:0000269" key="1">
    <source>
    </source>
</evidence>
<evidence type="ECO:0000269" key="2">
    <source>
    </source>
</evidence>
<evidence type="ECO:0000269" key="3">
    <source>
    </source>
</evidence>
<evidence type="ECO:0000269" key="4">
    <source>
    </source>
</evidence>
<evidence type="ECO:0000269" key="5">
    <source>
    </source>
</evidence>
<evidence type="ECO:0000269" key="6">
    <source>
    </source>
</evidence>
<evidence type="ECO:0000269" key="7">
    <source>
    </source>
</evidence>
<evidence type="ECO:0000269" key="8">
    <source>
    </source>
</evidence>
<evidence type="ECO:0000269" key="9">
    <source>
    </source>
</evidence>
<evidence type="ECO:0000303" key="10">
    <source>
    </source>
</evidence>
<evidence type="ECO:0000305" key="11"/>
<evidence type="ECO:0000312" key="12">
    <source>
        <dbReference type="Araport" id="AT2G05620"/>
    </source>
</evidence>
<evidence type="ECO:0000312" key="13">
    <source>
        <dbReference type="EMBL" id="AAD24646.1"/>
    </source>
</evidence>
<dbReference type="EMBL" id="AC006220">
    <property type="protein sequence ID" value="AAD24646.1"/>
    <property type="molecule type" value="Genomic_DNA"/>
</dbReference>
<dbReference type="EMBL" id="CP002685">
    <property type="protein sequence ID" value="AEC05957.1"/>
    <property type="molecule type" value="Genomic_DNA"/>
</dbReference>
<dbReference type="EMBL" id="CP002685">
    <property type="protein sequence ID" value="ANM61532.1"/>
    <property type="molecule type" value="Genomic_DNA"/>
</dbReference>
<dbReference type="EMBL" id="AF375454">
    <property type="protein sequence ID" value="AAK53038.1"/>
    <property type="molecule type" value="mRNA"/>
</dbReference>
<dbReference type="EMBL" id="AY060546">
    <property type="protein sequence ID" value="AAL31177.1"/>
    <property type="molecule type" value="mRNA"/>
</dbReference>
<dbReference type="EMBL" id="AY085613">
    <property type="protein sequence ID" value="AAM62834.1"/>
    <property type="molecule type" value="mRNA"/>
</dbReference>
<dbReference type="PIR" id="G84470">
    <property type="entry name" value="G84470"/>
</dbReference>
<dbReference type="RefSeq" id="NP_001318202.1">
    <property type="nucleotide sequence ID" value="NM_001335284.1"/>
</dbReference>
<dbReference type="RefSeq" id="NP_565327.1">
    <property type="nucleotide sequence ID" value="NM_126585.6"/>
</dbReference>
<dbReference type="SMR" id="Q9SL05"/>
<dbReference type="BioGRID" id="511">
    <property type="interactions" value="6"/>
</dbReference>
<dbReference type="FunCoup" id="Q9SL05">
    <property type="interactions" value="1084"/>
</dbReference>
<dbReference type="IntAct" id="Q9SL05">
    <property type="interactions" value="3"/>
</dbReference>
<dbReference type="STRING" id="3702.Q9SL05"/>
<dbReference type="PaxDb" id="3702-AT2G05620.1"/>
<dbReference type="ProteomicsDB" id="235049"/>
<dbReference type="EnsemblPlants" id="AT2G05620.1">
    <property type="protein sequence ID" value="AT2G05620.1"/>
    <property type="gene ID" value="AT2G05620"/>
</dbReference>
<dbReference type="EnsemblPlants" id="AT2G05620.2">
    <property type="protein sequence ID" value="AT2G05620.2"/>
    <property type="gene ID" value="AT2G05620"/>
</dbReference>
<dbReference type="GeneID" id="815111"/>
<dbReference type="Gramene" id="AT2G05620.1">
    <property type="protein sequence ID" value="AT2G05620.1"/>
    <property type="gene ID" value="AT2G05620"/>
</dbReference>
<dbReference type="Gramene" id="AT2G05620.2">
    <property type="protein sequence ID" value="AT2G05620.2"/>
    <property type="gene ID" value="AT2G05620"/>
</dbReference>
<dbReference type="KEGG" id="ath:AT2G05620"/>
<dbReference type="Araport" id="AT2G05620"/>
<dbReference type="TAIR" id="AT2G05620">
    <property type="gene designation" value="PGR5"/>
</dbReference>
<dbReference type="eggNOG" id="ENOG502S7VD">
    <property type="taxonomic scope" value="Eukaryota"/>
</dbReference>
<dbReference type="HOGENOM" id="CLU_124691_0_0_1"/>
<dbReference type="InParanoid" id="Q9SL05"/>
<dbReference type="OMA" id="PMMGNIN"/>
<dbReference type="PhylomeDB" id="Q9SL05"/>
<dbReference type="PRO" id="PR:Q9SL05"/>
<dbReference type="Proteomes" id="UP000006548">
    <property type="component" value="Chromosome 2"/>
</dbReference>
<dbReference type="ExpressionAtlas" id="Q9SL05">
    <property type="expression patterns" value="baseline and differential"/>
</dbReference>
<dbReference type="GO" id="GO:0009507">
    <property type="term" value="C:chloroplast"/>
    <property type="evidence" value="ECO:0007005"/>
    <property type="project" value="TAIR"/>
</dbReference>
<dbReference type="GO" id="GO:0009534">
    <property type="term" value="C:chloroplast thylakoid"/>
    <property type="evidence" value="ECO:0000314"/>
    <property type="project" value="TAIR"/>
</dbReference>
<dbReference type="GO" id="GO:0009535">
    <property type="term" value="C:chloroplast thylakoid membrane"/>
    <property type="evidence" value="ECO:0007005"/>
    <property type="project" value="TAIR"/>
</dbReference>
<dbReference type="GO" id="GO:0009055">
    <property type="term" value="F:electron transfer activity"/>
    <property type="evidence" value="ECO:0000315"/>
    <property type="project" value="TAIR"/>
</dbReference>
<dbReference type="GO" id="GO:0071484">
    <property type="term" value="P:cellular response to light intensity"/>
    <property type="evidence" value="ECO:0000315"/>
    <property type="project" value="TAIR"/>
</dbReference>
<dbReference type="GO" id="GO:0010117">
    <property type="term" value="P:photoprotection"/>
    <property type="evidence" value="ECO:0000315"/>
    <property type="project" value="TAIR"/>
</dbReference>
<dbReference type="GO" id="GO:0009773">
    <property type="term" value="P:photosynthetic electron transport in photosystem I"/>
    <property type="evidence" value="ECO:0000315"/>
    <property type="project" value="TAIR"/>
</dbReference>
<dbReference type="GO" id="GO:0009644">
    <property type="term" value="P:response to high light intensity"/>
    <property type="evidence" value="ECO:0000315"/>
    <property type="project" value="TAIR"/>
</dbReference>
<dbReference type="GO" id="GO:0009414">
    <property type="term" value="P:response to water deprivation"/>
    <property type="evidence" value="ECO:0000315"/>
    <property type="project" value="TAIR"/>
</dbReference>
<dbReference type="InterPro" id="IPR037497">
    <property type="entry name" value="PGR5"/>
</dbReference>
<dbReference type="PANTHER" id="PTHR35709">
    <property type="entry name" value="PROTEIN PROTON GRADIENT REGULATION 5, CHLOROPLASTIC"/>
    <property type="match status" value="1"/>
</dbReference>
<dbReference type="PANTHER" id="PTHR35709:SF1">
    <property type="entry name" value="PROTEIN PROTON GRADIENT REGULATION 5, CHLOROPLASTIC"/>
    <property type="match status" value="1"/>
</dbReference>
<protein>
    <recommendedName>
        <fullName evidence="10">Protein PROTON GRADIENT REGULATION 5, chloroplastic</fullName>
    </recommendedName>
</protein>
<proteinExistence type="evidence at protein level"/>